<keyword id="KW-0346">Stress response</keyword>
<accession>P28641</accession>
<comment type="induction">
    <text>By abscisic acid (ABA) and water stress.</text>
</comment>
<comment type="similarity">
    <text evidence="2">Belongs to the plant dehydrin family.</text>
</comment>
<evidence type="ECO:0000256" key="1">
    <source>
        <dbReference type="SAM" id="MobiDB-lite"/>
    </source>
</evidence>
<evidence type="ECO:0000305" key="2"/>
<protein>
    <recommendedName>
        <fullName>Dehydrin DHN3</fullName>
    </recommendedName>
</protein>
<reference key="1">
    <citation type="submission" date="1991-11" db="EMBL/GenBank/DDBJ databases">
        <authorList>
            <person name="Robertson M."/>
            <person name="Chandler P.M."/>
        </authorList>
    </citation>
    <scope>NUCLEOTIDE SEQUENCE [MRNA]</scope>
    <source>
        <strain>cv. Greenfeast</strain>
    </source>
</reference>
<name>DHN3_PEA</name>
<organism>
    <name type="scientific">Pisum sativum</name>
    <name type="common">Garden pea</name>
    <name type="synonym">Lathyrus oleraceus</name>
    <dbReference type="NCBI Taxonomy" id="3888"/>
    <lineage>
        <taxon>Eukaryota</taxon>
        <taxon>Viridiplantae</taxon>
        <taxon>Streptophyta</taxon>
        <taxon>Embryophyta</taxon>
        <taxon>Tracheophyta</taxon>
        <taxon>Spermatophyta</taxon>
        <taxon>Magnoliopsida</taxon>
        <taxon>eudicotyledons</taxon>
        <taxon>Gunneridae</taxon>
        <taxon>Pentapetalae</taxon>
        <taxon>rosids</taxon>
        <taxon>fabids</taxon>
        <taxon>Fabales</taxon>
        <taxon>Fabaceae</taxon>
        <taxon>Papilionoideae</taxon>
        <taxon>50 kb inversion clade</taxon>
        <taxon>NPAAA clade</taxon>
        <taxon>Hologalegina</taxon>
        <taxon>IRL clade</taxon>
        <taxon>Fabeae</taxon>
        <taxon>Pisum</taxon>
    </lineage>
</organism>
<dbReference type="EMBL" id="X63063">
    <property type="protein sequence ID" value="CAA44789.1"/>
    <property type="molecule type" value="mRNA"/>
</dbReference>
<dbReference type="PIR" id="S18139">
    <property type="entry name" value="S18139"/>
</dbReference>
<dbReference type="EnsemblPlants" id="Psat1g038760.1">
    <property type="protein sequence ID" value="Psat1g038760.1.cds1"/>
    <property type="gene ID" value="Psat1g038760"/>
</dbReference>
<dbReference type="Gramene" id="Psat1g038760.1">
    <property type="protein sequence ID" value="Psat1g038760.1.cds1"/>
    <property type="gene ID" value="Psat1g038760"/>
</dbReference>
<dbReference type="GO" id="GO:0005829">
    <property type="term" value="C:cytosol"/>
    <property type="evidence" value="ECO:0007669"/>
    <property type="project" value="TreeGrafter"/>
</dbReference>
<dbReference type="GO" id="GO:0009631">
    <property type="term" value="P:cold acclimation"/>
    <property type="evidence" value="ECO:0007669"/>
    <property type="project" value="TreeGrafter"/>
</dbReference>
<dbReference type="GO" id="GO:0009737">
    <property type="term" value="P:response to abscisic acid"/>
    <property type="evidence" value="ECO:0007669"/>
    <property type="project" value="TreeGrafter"/>
</dbReference>
<dbReference type="GO" id="GO:0009414">
    <property type="term" value="P:response to water deprivation"/>
    <property type="evidence" value="ECO:0007669"/>
    <property type="project" value="UniProtKB-ARBA"/>
</dbReference>
<dbReference type="InterPro" id="IPR000167">
    <property type="entry name" value="Dehydrin"/>
</dbReference>
<dbReference type="InterPro" id="IPR030513">
    <property type="entry name" value="Dehydrin_CS"/>
</dbReference>
<dbReference type="PANTHER" id="PTHR33346:SF42">
    <property type="entry name" value="DEHYDRIN XERO 1"/>
    <property type="match status" value="1"/>
</dbReference>
<dbReference type="PANTHER" id="PTHR33346">
    <property type="entry name" value="DEHYDRIN XERO 2-RELATED"/>
    <property type="match status" value="1"/>
</dbReference>
<dbReference type="PROSITE" id="PS00823">
    <property type="entry name" value="DEHYDRIN_2"/>
    <property type="match status" value="2"/>
</dbReference>
<feature type="chain" id="PRO_0000100060" description="Dehydrin DHN3">
    <location>
        <begin position="1"/>
        <end position="232"/>
    </location>
</feature>
<feature type="region of interest" description="Disordered" evidence="1">
    <location>
        <begin position="1"/>
        <end position="66"/>
    </location>
</feature>
<feature type="region of interest" description="Disordered" evidence="1">
    <location>
        <begin position="140"/>
        <end position="232"/>
    </location>
</feature>
<feature type="compositionally biased region" description="Polar residues" evidence="1">
    <location>
        <begin position="1"/>
        <end position="14"/>
    </location>
</feature>
<feature type="compositionally biased region" description="Gly residues" evidence="1">
    <location>
        <begin position="49"/>
        <end position="60"/>
    </location>
</feature>
<feature type="compositionally biased region" description="Basic and acidic residues" evidence="1">
    <location>
        <begin position="140"/>
        <end position="157"/>
    </location>
</feature>
<feature type="compositionally biased region" description="Polar residues" evidence="1">
    <location>
        <begin position="159"/>
        <end position="168"/>
    </location>
</feature>
<feature type="compositionally biased region" description="Basic and acidic residues" evidence="1">
    <location>
        <begin position="198"/>
        <end position="223"/>
    </location>
</feature>
<proteinExistence type="evidence at transcript level"/>
<gene>
    <name type="primary">DHN3</name>
</gene>
<sequence>MSQYQNQYGAQTGMTDEYGNPVNQVDQYGNPISGGGGLTGEAGRQHYGTTGGATGQGHGHGQQHRGVDQTTGYGTHTGGVGGYGTKPEYGSTNTGSGYGTGTGYGGSGTNPDYGSTNTGSGYGTGTGYGGSGTTEYVREEHHGDKKGVMDKIKEKIPGTEQSRTNTDGTGYGSTGQGYVREQQHGTGYGSTGQGYVREQQDVHHGDEQHGEKKGIMEKIKEKLPGTGACTGH</sequence>